<name>PSRP_SHEHH</name>
<keyword id="KW-0418">Kinase</keyword>
<keyword id="KW-0547">Nucleotide-binding</keyword>
<keyword id="KW-0723">Serine/threonine-protein kinase</keyword>
<keyword id="KW-0808">Transferase</keyword>
<comment type="function">
    <text evidence="1">Bifunctional serine/threonine kinase and phosphorylase involved in the regulation of the phosphoenolpyruvate synthase (PEPS) by catalyzing its phosphorylation/dephosphorylation.</text>
</comment>
<comment type="catalytic activity">
    <reaction evidence="1">
        <text>[pyruvate, water dikinase] + ADP = [pyruvate, water dikinase]-phosphate + AMP + H(+)</text>
        <dbReference type="Rhea" id="RHEA:46020"/>
        <dbReference type="Rhea" id="RHEA-COMP:11425"/>
        <dbReference type="Rhea" id="RHEA-COMP:11426"/>
        <dbReference type="ChEBI" id="CHEBI:15378"/>
        <dbReference type="ChEBI" id="CHEBI:43176"/>
        <dbReference type="ChEBI" id="CHEBI:68546"/>
        <dbReference type="ChEBI" id="CHEBI:456215"/>
        <dbReference type="ChEBI" id="CHEBI:456216"/>
        <dbReference type="EC" id="2.7.11.33"/>
    </reaction>
</comment>
<comment type="catalytic activity">
    <reaction evidence="1">
        <text>[pyruvate, water dikinase]-phosphate + phosphate + H(+) = [pyruvate, water dikinase] + diphosphate</text>
        <dbReference type="Rhea" id="RHEA:48580"/>
        <dbReference type="Rhea" id="RHEA-COMP:11425"/>
        <dbReference type="Rhea" id="RHEA-COMP:11426"/>
        <dbReference type="ChEBI" id="CHEBI:15378"/>
        <dbReference type="ChEBI" id="CHEBI:33019"/>
        <dbReference type="ChEBI" id="CHEBI:43176"/>
        <dbReference type="ChEBI" id="CHEBI:43474"/>
        <dbReference type="ChEBI" id="CHEBI:68546"/>
        <dbReference type="EC" id="2.7.4.28"/>
    </reaction>
</comment>
<comment type="similarity">
    <text evidence="1">Belongs to the pyruvate, phosphate/water dikinase regulatory protein family. PSRP subfamily.</text>
</comment>
<evidence type="ECO:0000255" key="1">
    <source>
        <dbReference type="HAMAP-Rule" id="MF_01062"/>
    </source>
</evidence>
<protein>
    <recommendedName>
        <fullName evidence="1">Putative phosphoenolpyruvate synthase regulatory protein</fullName>
        <shortName evidence="1">PEP synthase regulatory protein</shortName>
        <shortName evidence="1">PSRP</shortName>
        <ecNumber evidence="1">2.7.11.33</ecNumber>
        <ecNumber evidence="1">2.7.4.28</ecNumber>
    </recommendedName>
    <alternativeName>
        <fullName evidence="1">Pyruvate, water dikinase regulatory protein</fullName>
    </alternativeName>
</protein>
<reference key="1">
    <citation type="submission" date="2008-01" db="EMBL/GenBank/DDBJ databases">
        <title>Complete sequence of Shewanella halifaxensis HAW-EB4.</title>
        <authorList>
            <consortium name="US DOE Joint Genome Institute"/>
            <person name="Copeland A."/>
            <person name="Lucas S."/>
            <person name="Lapidus A."/>
            <person name="Glavina del Rio T."/>
            <person name="Dalin E."/>
            <person name="Tice H."/>
            <person name="Bruce D."/>
            <person name="Goodwin L."/>
            <person name="Pitluck S."/>
            <person name="Sims D."/>
            <person name="Brettin T."/>
            <person name="Detter J.C."/>
            <person name="Han C."/>
            <person name="Kuske C.R."/>
            <person name="Schmutz J."/>
            <person name="Larimer F."/>
            <person name="Land M."/>
            <person name="Hauser L."/>
            <person name="Kyrpides N."/>
            <person name="Kim E."/>
            <person name="Zhao J.-S."/>
            <person name="Richardson P."/>
        </authorList>
    </citation>
    <scope>NUCLEOTIDE SEQUENCE [LARGE SCALE GENOMIC DNA]</scope>
    <source>
        <strain>HAW-EB4</strain>
    </source>
</reference>
<proteinExistence type="inferred from homology"/>
<accession>B0TPZ1</accession>
<dbReference type="EC" id="2.7.11.33" evidence="1"/>
<dbReference type="EC" id="2.7.4.28" evidence="1"/>
<dbReference type="EMBL" id="CP000931">
    <property type="protein sequence ID" value="ABZ76270.1"/>
    <property type="molecule type" value="Genomic_DNA"/>
</dbReference>
<dbReference type="RefSeq" id="WP_012276807.1">
    <property type="nucleotide sequence ID" value="NC_010334.1"/>
</dbReference>
<dbReference type="SMR" id="B0TPZ1"/>
<dbReference type="STRING" id="458817.Shal_1704"/>
<dbReference type="KEGG" id="shl:Shal_1704"/>
<dbReference type="eggNOG" id="COG1806">
    <property type="taxonomic scope" value="Bacteria"/>
</dbReference>
<dbReference type="HOGENOM" id="CLU_046206_1_0_6"/>
<dbReference type="OrthoDB" id="9782201at2"/>
<dbReference type="Proteomes" id="UP000001317">
    <property type="component" value="Chromosome"/>
</dbReference>
<dbReference type="GO" id="GO:0043531">
    <property type="term" value="F:ADP binding"/>
    <property type="evidence" value="ECO:0007669"/>
    <property type="project" value="UniProtKB-UniRule"/>
</dbReference>
<dbReference type="GO" id="GO:0005524">
    <property type="term" value="F:ATP binding"/>
    <property type="evidence" value="ECO:0007669"/>
    <property type="project" value="InterPro"/>
</dbReference>
<dbReference type="GO" id="GO:0016776">
    <property type="term" value="F:phosphotransferase activity, phosphate group as acceptor"/>
    <property type="evidence" value="ECO:0007669"/>
    <property type="project" value="UniProtKB-UniRule"/>
</dbReference>
<dbReference type="GO" id="GO:0004674">
    <property type="term" value="F:protein serine/threonine kinase activity"/>
    <property type="evidence" value="ECO:0007669"/>
    <property type="project" value="UniProtKB-UniRule"/>
</dbReference>
<dbReference type="HAMAP" id="MF_01062">
    <property type="entry name" value="PSRP"/>
    <property type="match status" value="1"/>
</dbReference>
<dbReference type="InterPro" id="IPR005177">
    <property type="entry name" value="Kinase-pyrophosphorylase"/>
</dbReference>
<dbReference type="InterPro" id="IPR026530">
    <property type="entry name" value="PSRP"/>
</dbReference>
<dbReference type="NCBIfam" id="NF003742">
    <property type="entry name" value="PRK05339.1"/>
    <property type="match status" value="1"/>
</dbReference>
<dbReference type="PANTHER" id="PTHR31756">
    <property type="entry name" value="PYRUVATE, PHOSPHATE DIKINASE REGULATORY PROTEIN 1, CHLOROPLASTIC"/>
    <property type="match status" value="1"/>
</dbReference>
<dbReference type="PANTHER" id="PTHR31756:SF3">
    <property type="entry name" value="PYRUVATE, PHOSPHATE DIKINASE REGULATORY PROTEIN 1, CHLOROPLASTIC"/>
    <property type="match status" value="1"/>
</dbReference>
<dbReference type="Pfam" id="PF03618">
    <property type="entry name" value="Kinase-PPPase"/>
    <property type="match status" value="1"/>
</dbReference>
<organism>
    <name type="scientific">Shewanella halifaxensis (strain HAW-EB4)</name>
    <dbReference type="NCBI Taxonomy" id="458817"/>
    <lineage>
        <taxon>Bacteria</taxon>
        <taxon>Pseudomonadati</taxon>
        <taxon>Pseudomonadota</taxon>
        <taxon>Gammaproteobacteria</taxon>
        <taxon>Alteromonadales</taxon>
        <taxon>Shewanellaceae</taxon>
        <taxon>Shewanella</taxon>
    </lineage>
</organism>
<gene>
    <name type="ordered locus">Shal_1704</name>
</gene>
<sequence>MLRKVFYISDGTAITAEVFGHAVLSQFPLEFDALTIPFVETEAKAEAVKAQINDCFITTGERPLVFHSIVKPEIRDVIYSSEGLDYDFLNTFVAPLEKQLGIAATPAMHRTHGKANEGYEARIDAINYAMENDDGQTMKHMDKADLILLGVSRCGKTPSSLYLSMQFGIKAANYPFTEDDMDNLKLPDALKRNKGKLFGLTIDPERLHEIRHSRMSNSRYSSLRQCRMEVKEVEMMYQKERIPFVNTTNHSVEEIATKILEITGLKRHMF</sequence>
<feature type="chain" id="PRO_1000084473" description="Putative phosphoenolpyruvate synthase regulatory protein">
    <location>
        <begin position="1"/>
        <end position="270"/>
    </location>
</feature>
<feature type="binding site" evidence="1">
    <location>
        <begin position="150"/>
        <end position="157"/>
    </location>
    <ligand>
        <name>ADP</name>
        <dbReference type="ChEBI" id="CHEBI:456216"/>
    </ligand>
</feature>